<proteinExistence type="inferred from homology"/>
<accession>B0SHV5</accession>
<organism>
    <name type="scientific">Leptospira biflexa serovar Patoc (strain Patoc 1 / Ames)</name>
    <dbReference type="NCBI Taxonomy" id="355278"/>
    <lineage>
        <taxon>Bacteria</taxon>
        <taxon>Pseudomonadati</taxon>
        <taxon>Spirochaetota</taxon>
        <taxon>Spirochaetia</taxon>
        <taxon>Leptospirales</taxon>
        <taxon>Leptospiraceae</taxon>
        <taxon>Leptospira</taxon>
    </lineage>
</organism>
<sequence>MGTVNVVNVAKKHQFSWYEKFYFWSIGKGLWITLKHFVKVAFFNKQVTIEYPDKKRQYSTRFRGMHSMKRDEQGRERCTACFCCMWICPANAIHIEAAEVTAERQHLHPEDKYAKKFEINLLRCIFCGLCEEACPKGAIYLDGTGEMAADNREDLFLTKERMMEKTGGPILGQRN</sequence>
<name>NUOI_LEPBA</name>
<evidence type="ECO:0000255" key="1">
    <source>
        <dbReference type="HAMAP-Rule" id="MF_01351"/>
    </source>
</evidence>
<feature type="chain" id="PRO_1000143649" description="NADH-quinone oxidoreductase subunit I">
    <location>
        <begin position="1"/>
        <end position="175"/>
    </location>
</feature>
<feature type="domain" description="4Fe-4S ferredoxin-type 1" evidence="1">
    <location>
        <begin position="69"/>
        <end position="98"/>
    </location>
</feature>
<feature type="domain" description="4Fe-4S ferredoxin-type 2" evidence="1">
    <location>
        <begin position="115"/>
        <end position="144"/>
    </location>
</feature>
<feature type="binding site" evidence="1">
    <location>
        <position position="78"/>
    </location>
    <ligand>
        <name>[4Fe-4S] cluster</name>
        <dbReference type="ChEBI" id="CHEBI:49883"/>
        <label>1</label>
    </ligand>
</feature>
<feature type="binding site" evidence="1">
    <location>
        <position position="81"/>
    </location>
    <ligand>
        <name>[4Fe-4S] cluster</name>
        <dbReference type="ChEBI" id="CHEBI:49883"/>
        <label>1</label>
    </ligand>
</feature>
<feature type="binding site" evidence="1">
    <location>
        <position position="84"/>
    </location>
    <ligand>
        <name>[4Fe-4S] cluster</name>
        <dbReference type="ChEBI" id="CHEBI:49883"/>
        <label>1</label>
    </ligand>
</feature>
<feature type="binding site" evidence="1">
    <location>
        <position position="88"/>
    </location>
    <ligand>
        <name>[4Fe-4S] cluster</name>
        <dbReference type="ChEBI" id="CHEBI:49883"/>
        <label>2</label>
    </ligand>
</feature>
<feature type="binding site" evidence="1">
    <location>
        <position position="124"/>
    </location>
    <ligand>
        <name>[4Fe-4S] cluster</name>
        <dbReference type="ChEBI" id="CHEBI:49883"/>
        <label>2</label>
    </ligand>
</feature>
<feature type="binding site" evidence="1">
    <location>
        <position position="127"/>
    </location>
    <ligand>
        <name>[4Fe-4S] cluster</name>
        <dbReference type="ChEBI" id="CHEBI:49883"/>
        <label>2</label>
    </ligand>
</feature>
<feature type="binding site" evidence="1">
    <location>
        <position position="130"/>
    </location>
    <ligand>
        <name>[4Fe-4S] cluster</name>
        <dbReference type="ChEBI" id="CHEBI:49883"/>
        <label>2</label>
    </ligand>
</feature>
<feature type="binding site" evidence="1">
    <location>
        <position position="134"/>
    </location>
    <ligand>
        <name>[4Fe-4S] cluster</name>
        <dbReference type="ChEBI" id="CHEBI:49883"/>
        <label>1</label>
    </ligand>
</feature>
<gene>
    <name evidence="1" type="primary">nuoI</name>
    <name type="ordered locus">LBF_3289</name>
</gene>
<comment type="function">
    <text evidence="1">NDH-1 shuttles electrons from NADH, via FMN and iron-sulfur (Fe-S) centers, to quinones in the respiratory chain. The immediate electron acceptor for the enzyme in this species is believed to be ubiquinone. Couples the redox reaction to proton translocation (for every two electrons transferred, four hydrogen ions are translocated across the cytoplasmic membrane), and thus conserves the redox energy in a proton gradient.</text>
</comment>
<comment type="catalytic activity">
    <reaction evidence="1">
        <text>a quinone + NADH + 5 H(+)(in) = a quinol + NAD(+) + 4 H(+)(out)</text>
        <dbReference type="Rhea" id="RHEA:57888"/>
        <dbReference type="ChEBI" id="CHEBI:15378"/>
        <dbReference type="ChEBI" id="CHEBI:24646"/>
        <dbReference type="ChEBI" id="CHEBI:57540"/>
        <dbReference type="ChEBI" id="CHEBI:57945"/>
        <dbReference type="ChEBI" id="CHEBI:132124"/>
    </reaction>
</comment>
<comment type="cofactor">
    <cofactor evidence="1">
        <name>[4Fe-4S] cluster</name>
        <dbReference type="ChEBI" id="CHEBI:49883"/>
    </cofactor>
    <text evidence="1">Binds 2 [4Fe-4S] clusters per subunit.</text>
</comment>
<comment type="subunit">
    <text evidence="1">NDH-1 is composed of 14 different subunits. Subunits NuoA, H, J, K, L, M, N constitute the membrane sector of the complex.</text>
</comment>
<comment type="subcellular location">
    <subcellularLocation>
        <location evidence="1">Cell inner membrane</location>
        <topology evidence="1">Peripheral membrane protein</topology>
    </subcellularLocation>
</comment>
<comment type="similarity">
    <text evidence="1">Belongs to the complex I 23 kDa subunit family.</text>
</comment>
<reference key="1">
    <citation type="journal article" date="2008" name="PLoS ONE">
        <title>Genome sequence of the saprophyte Leptospira biflexa provides insights into the evolution of Leptospira and the pathogenesis of leptospirosis.</title>
        <authorList>
            <person name="Picardeau M."/>
            <person name="Bulach D.M."/>
            <person name="Bouchier C."/>
            <person name="Zuerner R.L."/>
            <person name="Zidane N."/>
            <person name="Wilson P.J."/>
            <person name="Creno S."/>
            <person name="Kuczek E.S."/>
            <person name="Bommezzadri S."/>
            <person name="Davis J.C."/>
            <person name="McGrath A."/>
            <person name="Johnson M.J."/>
            <person name="Boursaux-Eude C."/>
            <person name="Seemann T."/>
            <person name="Rouy Z."/>
            <person name="Coppel R.L."/>
            <person name="Rood J.I."/>
            <person name="Lajus A."/>
            <person name="Davies J.K."/>
            <person name="Medigue C."/>
            <person name="Adler B."/>
        </authorList>
    </citation>
    <scope>NUCLEOTIDE SEQUENCE [LARGE SCALE GENOMIC DNA]</scope>
    <source>
        <strain>Patoc 1 / Ames</strain>
    </source>
</reference>
<protein>
    <recommendedName>
        <fullName evidence="1">NADH-quinone oxidoreductase subunit I</fullName>
        <ecNumber evidence="1">7.1.1.-</ecNumber>
    </recommendedName>
    <alternativeName>
        <fullName evidence="1">NADH dehydrogenase I subunit I</fullName>
    </alternativeName>
    <alternativeName>
        <fullName evidence="1">NDH-1 subunit I</fullName>
    </alternativeName>
</protein>
<dbReference type="EC" id="7.1.1.-" evidence="1"/>
<dbReference type="EMBL" id="CP000777">
    <property type="protein sequence ID" value="ABZ95756.1"/>
    <property type="molecule type" value="Genomic_DNA"/>
</dbReference>
<dbReference type="RefSeq" id="WP_012390323.1">
    <property type="nucleotide sequence ID" value="NC_010842.1"/>
</dbReference>
<dbReference type="SMR" id="B0SHV5"/>
<dbReference type="KEGG" id="lbf:LBF_3289"/>
<dbReference type="HOGENOM" id="CLU_067218_4_3_12"/>
<dbReference type="GO" id="GO:0005886">
    <property type="term" value="C:plasma membrane"/>
    <property type="evidence" value="ECO:0007669"/>
    <property type="project" value="UniProtKB-SubCell"/>
</dbReference>
<dbReference type="GO" id="GO:0051539">
    <property type="term" value="F:4 iron, 4 sulfur cluster binding"/>
    <property type="evidence" value="ECO:0007669"/>
    <property type="project" value="UniProtKB-KW"/>
</dbReference>
<dbReference type="GO" id="GO:0005506">
    <property type="term" value="F:iron ion binding"/>
    <property type="evidence" value="ECO:0007669"/>
    <property type="project" value="UniProtKB-UniRule"/>
</dbReference>
<dbReference type="GO" id="GO:0050136">
    <property type="term" value="F:NADH:ubiquinone reductase (non-electrogenic) activity"/>
    <property type="evidence" value="ECO:0007669"/>
    <property type="project" value="UniProtKB-UniRule"/>
</dbReference>
<dbReference type="GO" id="GO:0048038">
    <property type="term" value="F:quinone binding"/>
    <property type="evidence" value="ECO:0007669"/>
    <property type="project" value="UniProtKB-KW"/>
</dbReference>
<dbReference type="GO" id="GO:0009060">
    <property type="term" value="P:aerobic respiration"/>
    <property type="evidence" value="ECO:0007669"/>
    <property type="project" value="TreeGrafter"/>
</dbReference>
<dbReference type="Gene3D" id="3.30.70.3270">
    <property type="match status" value="1"/>
</dbReference>
<dbReference type="HAMAP" id="MF_01351">
    <property type="entry name" value="NDH1_NuoI"/>
    <property type="match status" value="1"/>
</dbReference>
<dbReference type="InterPro" id="IPR017896">
    <property type="entry name" value="4Fe4S_Fe-S-bd"/>
</dbReference>
<dbReference type="InterPro" id="IPR017900">
    <property type="entry name" value="4Fe4S_Fe_S_CS"/>
</dbReference>
<dbReference type="InterPro" id="IPR010226">
    <property type="entry name" value="NADH_quinone_OxRdtase_chainI"/>
</dbReference>
<dbReference type="NCBIfam" id="TIGR01971">
    <property type="entry name" value="NuoI"/>
    <property type="match status" value="1"/>
</dbReference>
<dbReference type="PANTHER" id="PTHR10849:SF20">
    <property type="entry name" value="NADH DEHYDROGENASE [UBIQUINONE] IRON-SULFUR PROTEIN 8, MITOCHONDRIAL"/>
    <property type="match status" value="1"/>
</dbReference>
<dbReference type="PANTHER" id="PTHR10849">
    <property type="entry name" value="NADH DEHYDROGENASE UBIQUINONE IRON-SULFUR PROTEIN 8, MITOCHONDRIAL"/>
    <property type="match status" value="1"/>
</dbReference>
<dbReference type="Pfam" id="PF12838">
    <property type="entry name" value="Fer4_7"/>
    <property type="match status" value="1"/>
</dbReference>
<dbReference type="SUPFAM" id="SSF54862">
    <property type="entry name" value="4Fe-4S ferredoxins"/>
    <property type="match status" value="1"/>
</dbReference>
<dbReference type="PROSITE" id="PS00198">
    <property type="entry name" value="4FE4S_FER_1"/>
    <property type="match status" value="2"/>
</dbReference>
<dbReference type="PROSITE" id="PS51379">
    <property type="entry name" value="4FE4S_FER_2"/>
    <property type="match status" value="2"/>
</dbReference>
<keyword id="KW-0004">4Fe-4S</keyword>
<keyword id="KW-0997">Cell inner membrane</keyword>
<keyword id="KW-1003">Cell membrane</keyword>
<keyword id="KW-0408">Iron</keyword>
<keyword id="KW-0411">Iron-sulfur</keyword>
<keyword id="KW-0472">Membrane</keyword>
<keyword id="KW-0479">Metal-binding</keyword>
<keyword id="KW-0520">NAD</keyword>
<keyword id="KW-0874">Quinone</keyword>
<keyword id="KW-0677">Repeat</keyword>
<keyword id="KW-1278">Translocase</keyword>
<keyword id="KW-0830">Ubiquinone</keyword>